<feature type="chain" id="PRO_0000147014" description="Sphingosine-1-phosphate lyase 1">
    <location>
        <begin position="1"/>
        <end position="568"/>
    </location>
</feature>
<feature type="topological domain" description="Lumenal" evidence="5">
    <location>
        <begin position="1"/>
        <end position="41"/>
    </location>
</feature>
<feature type="transmembrane region" description="Helical; Signal-anchor for type III membrane protein" evidence="5">
    <location>
        <begin position="42"/>
        <end position="62"/>
    </location>
</feature>
<feature type="topological domain" description="Cytoplasmic" evidence="5">
    <location>
        <begin position="63"/>
        <end position="568"/>
    </location>
</feature>
<feature type="modified residue" description="N6-(pyridoxal phosphate)lysine; alternate" evidence="1">
    <location>
        <position position="353"/>
    </location>
</feature>
<feature type="modified residue" description="N6-acetyllysine; alternate" evidence="2">
    <location>
        <position position="353"/>
    </location>
</feature>
<feature type="modified residue" description="3'-nitrotyrosine" evidence="2">
    <location>
        <position position="356"/>
    </location>
</feature>
<feature type="modified residue" description="3'-nitrotyrosine" evidence="2">
    <location>
        <position position="366"/>
    </location>
</feature>
<feature type="modified residue" description="Phosphoserine" evidence="2">
    <location>
        <position position="564"/>
    </location>
</feature>
<comment type="function">
    <text evidence="2 3 4">Cleaves phosphorylated sphingoid bases (PSBs), such as sphingosine-1-phosphate, into fatty aldehydes and phosphoethanolamine. Elevates stress-induced ceramide production and apoptosis (By similarity). Required for global lipid homeostasis in liver and cholesterol homeostasis in fibroblasts. Involved in the regulation of pro-inflammatory response and neutrophil trafficking. Modulates neuronal autophagy via phosphoethanolamine production which regulates accumulation of aggregate-prone proteins such as APP (By similarity). Seems to play a role in establishing neuronal contact sites and axonal maintenance (By similarity).</text>
</comment>
<comment type="catalytic activity">
    <reaction evidence="2">
        <text>sphinganine 1-phosphate = hexadecanal + phosphoethanolamine</text>
        <dbReference type="Rhea" id="RHEA:18593"/>
        <dbReference type="ChEBI" id="CHEBI:17600"/>
        <dbReference type="ChEBI" id="CHEBI:57939"/>
        <dbReference type="ChEBI" id="CHEBI:58190"/>
        <dbReference type="EC" id="4.1.2.27"/>
    </reaction>
</comment>
<comment type="catalytic activity">
    <reaction evidence="2">
        <text>sphing-4-enine 1-phosphate = (2E)-hexadecenal + phosphoethanolamine</text>
        <dbReference type="Rhea" id="RHEA:33507"/>
        <dbReference type="ChEBI" id="CHEBI:17585"/>
        <dbReference type="ChEBI" id="CHEBI:58190"/>
        <dbReference type="ChEBI" id="CHEBI:60119"/>
        <dbReference type="EC" id="4.1.2.27"/>
    </reaction>
</comment>
<comment type="cofactor">
    <cofactor evidence="2">
        <name>pyridoxal 5'-phosphate</name>
        <dbReference type="ChEBI" id="CHEBI:597326"/>
    </cofactor>
</comment>
<comment type="pathway">
    <text evidence="2">Lipid metabolism; sphingolipid metabolism.</text>
</comment>
<comment type="subunit">
    <text evidence="2">Homodimer.</text>
</comment>
<comment type="subcellular location">
    <subcellularLocation>
        <location evidence="2">Endoplasmic reticulum membrane</location>
        <topology evidence="5">Single-pass type III membrane protein</topology>
        <orientation evidence="3">Cytoplasmic side</orientation>
    </subcellularLocation>
</comment>
<comment type="similarity">
    <text evidence="6">Belongs to the group II decarboxylase family. Sphingosine-1-phosphate lyase subfamily.</text>
</comment>
<name>SGPL1_RAT</name>
<keyword id="KW-0007">Acetylation</keyword>
<keyword id="KW-0053">Apoptosis</keyword>
<keyword id="KW-0256">Endoplasmic reticulum</keyword>
<keyword id="KW-0443">Lipid metabolism</keyword>
<keyword id="KW-0456">Lyase</keyword>
<keyword id="KW-0472">Membrane</keyword>
<keyword id="KW-0944">Nitration</keyword>
<keyword id="KW-0597">Phosphoprotein</keyword>
<keyword id="KW-0663">Pyridoxal phosphate</keyword>
<keyword id="KW-1185">Reference proteome</keyword>
<keyword id="KW-0735">Signal-anchor</keyword>
<keyword id="KW-0746">Sphingolipid metabolism</keyword>
<keyword id="KW-0812">Transmembrane</keyword>
<keyword id="KW-1133">Transmembrane helix</keyword>
<gene>
    <name evidence="7" type="primary">Sgpl1</name>
    <name type="synonym">Spl</name>
</gene>
<reference key="1">
    <citation type="submission" date="2002-10" db="EMBL/GenBank/DDBJ databases">
        <title>Comparison of sphingosine-1-phosphate lyases.</title>
        <authorList>
            <person name="Van Veldhoven P.P."/>
        </authorList>
    </citation>
    <scope>NUCLEOTIDE SEQUENCE [MRNA]</scope>
</reference>
<proteinExistence type="evidence at transcript level"/>
<accession>Q8CHN6</accession>
<protein>
    <recommendedName>
        <fullName evidence="6">Sphingosine-1-phosphate lyase 1</fullName>
        <shortName>S1PL</shortName>
        <shortName>SP-lyase 1</shortName>
        <shortName>SPL</shortName>
        <shortName>SPL 1</shortName>
        <ecNumber evidence="2">4.1.2.27</ecNumber>
    </recommendedName>
    <alternativeName>
        <fullName>Sphingosine-1-phosphate aldolase</fullName>
    </alternativeName>
</protein>
<dbReference type="EC" id="4.1.2.27" evidence="2"/>
<dbReference type="EMBL" id="AJ512838">
    <property type="protein sequence ID" value="CAD55407.1"/>
    <property type="molecule type" value="mRNA"/>
</dbReference>
<dbReference type="RefSeq" id="NP_001421496.1">
    <property type="nucleotide sequence ID" value="NM_001434567.1"/>
</dbReference>
<dbReference type="RefSeq" id="NP_001421497.1">
    <property type="nucleotide sequence ID" value="NM_001434568.1"/>
</dbReference>
<dbReference type="RefSeq" id="NP_001421498.1">
    <property type="nucleotide sequence ID" value="NM_001434569.1"/>
</dbReference>
<dbReference type="RefSeq" id="NP_775139.1">
    <property type="nucleotide sequence ID" value="NM_173116.2"/>
</dbReference>
<dbReference type="RefSeq" id="XP_008771092.1">
    <property type="nucleotide sequence ID" value="XM_008772870.2"/>
</dbReference>
<dbReference type="RefSeq" id="XP_008771093.1">
    <property type="nucleotide sequence ID" value="XM_008772871.1"/>
</dbReference>
<dbReference type="RefSeq" id="XP_008771094.1">
    <property type="nucleotide sequence ID" value="XM_008772872.3"/>
</dbReference>
<dbReference type="RefSeq" id="XP_008771095.1">
    <property type="nucleotide sequence ID" value="XM_008772873.1"/>
</dbReference>
<dbReference type="SMR" id="Q8CHN6"/>
<dbReference type="BioGRID" id="251889">
    <property type="interactions" value="1"/>
</dbReference>
<dbReference type="FunCoup" id="Q8CHN6">
    <property type="interactions" value="2489"/>
</dbReference>
<dbReference type="IntAct" id="Q8CHN6">
    <property type="interactions" value="1"/>
</dbReference>
<dbReference type="STRING" id="10116.ENSRNOP00000070983"/>
<dbReference type="BindingDB" id="Q8CHN6"/>
<dbReference type="ChEMBL" id="CHEMBL3826869"/>
<dbReference type="iPTMnet" id="Q8CHN6"/>
<dbReference type="PhosphoSitePlus" id="Q8CHN6"/>
<dbReference type="jPOST" id="Q8CHN6"/>
<dbReference type="PaxDb" id="10116-ENSRNOP00000059089"/>
<dbReference type="GeneID" id="286896"/>
<dbReference type="KEGG" id="rno:286896"/>
<dbReference type="UCSC" id="RGD:628599">
    <property type="organism name" value="rat"/>
</dbReference>
<dbReference type="AGR" id="RGD:628599"/>
<dbReference type="CTD" id="8879"/>
<dbReference type="RGD" id="628599">
    <property type="gene designation" value="Sgpl1"/>
</dbReference>
<dbReference type="VEuPathDB" id="HostDB:ENSRNOG00000000565"/>
<dbReference type="eggNOG" id="KOG1383">
    <property type="taxonomic scope" value="Eukaryota"/>
</dbReference>
<dbReference type="InParanoid" id="Q8CHN6"/>
<dbReference type="OrthoDB" id="10254570at2759"/>
<dbReference type="PhylomeDB" id="Q8CHN6"/>
<dbReference type="TreeFam" id="TF300777"/>
<dbReference type="Reactome" id="R-RNO-9845614">
    <property type="pathway name" value="Sphingolipid catabolism"/>
</dbReference>
<dbReference type="UniPathway" id="UPA00222"/>
<dbReference type="PRO" id="PR:Q8CHN6"/>
<dbReference type="Proteomes" id="UP000002494">
    <property type="component" value="Chromosome 20"/>
</dbReference>
<dbReference type="Bgee" id="ENSRNOG00000000565">
    <property type="expression patterns" value="Expressed in jejunum and 19 other cell types or tissues"/>
</dbReference>
<dbReference type="GO" id="GO:0005783">
    <property type="term" value="C:endoplasmic reticulum"/>
    <property type="evidence" value="ECO:0000250"/>
    <property type="project" value="UniProtKB"/>
</dbReference>
<dbReference type="GO" id="GO:0005789">
    <property type="term" value="C:endoplasmic reticulum membrane"/>
    <property type="evidence" value="ECO:0007669"/>
    <property type="project" value="UniProtKB-SubCell"/>
</dbReference>
<dbReference type="GO" id="GO:0030170">
    <property type="term" value="F:pyridoxal phosphate binding"/>
    <property type="evidence" value="ECO:0007669"/>
    <property type="project" value="InterPro"/>
</dbReference>
<dbReference type="GO" id="GO:0008117">
    <property type="term" value="F:sphinganine-1-phosphate aldolase activity"/>
    <property type="evidence" value="ECO:0000250"/>
    <property type="project" value="UniProtKB"/>
</dbReference>
<dbReference type="GO" id="GO:0008209">
    <property type="term" value="P:androgen metabolic process"/>
    <property type="evidence" value="ECO:0000266"/>
    <property type="project" value="RGD"/>
</dbReference>
<dbReference type="GO" id="GO:0097190">
    <property type="term" value="P:apoptotic signaling pathway"/>
    <property type="evidence" value="ECO:0000250"/>
    <property type="project" value="UniProtKB"/>
</dbReference>
<dbReference type="GO" id="GO:0006672">
    <property type="term" value="P:ceramide metabolic process"/>
    <property type="evidence" value="ECO:0000250"/>
    <property type="project" value="UniProtKB"/>
</dbReference>
<dbReference type="GO" id="GO:0008210">
    <property type="term" value="P:estrogen metabolic process"/>
    <property type="evidence" value="ECO:0000266"/>
    <property type="project" value="RGD"/>
</dbReference>
<dbReference type="GO" id="GO:0060325">
    <property type="term" value="P:face morphogenesis"/>
    <property type="evidence" value="ECO:0000266"/>
    <property type="project" value="RGD"/>
</dbReference>
<dbReference type="GO" id="GO:0006631">
    <property type="term" value="P:fatty acid metabolic process"/>
    <property type="evidence" value="ECO:0000250"/>
    <property type="project" value="UniProtKB"/>
</dbReference>
<dbReference type="GO" id="GO:0008585">
    <property type="term" value="P:female gonad development"/>
    <property type="evidence" value="ECO:0000266"/>
    <property type="project" value="RGD"/>
</dbReference>
<dbReference type="GO" id="GO:0010761">
    <property type="term" value="P:fibroblast migration"/>
    <property type="evidence" value="ECO:0000266"/>
    <property type="project" value="RGD"/>
</dbReference>
<dbReference type="GO" id="GO:0030097">
    <property type="term" value="P:hemopoiesis"/>
    <property type="evidence" value="ECO:0000266"/>
    <property type="project" value="RGD"/>
</dbReference>
<dbReference type="GO" id="GO:0001822">
    <property type="term" value="P:kidney development"/>
    <property type="evidence" value="ECO:0000266"/>
    <property type="project" value="RGD"/>
</dbReference>
<dbReference type="GO" id="GO:0033327">
    <property type="term" value="P:Leydig cell differentiation"/>
    <property type="evidence" value="ECO:0000266"/>
    <property type="project" value="RGD"/>
</dbReference>
<dbReference type="GO" id="GO:0001553">
    <property type="term" value="P:luteinization"/>
    <property type="evidence" value="ECO:0000266"/>
    <property type="project" value="RGD"/>
</dbReference>
<dbReference type="GO" id="GO:0048008">
    <property type="term" value="P:platelet-derived growth factor receptor signaling pathway"/>
    <property type="evidence" value="ECO:0000266"/>
    <property type="project" value="RGD"/>
</dbReference>
<dbReference type="GO" id="GO:0009791">
    <property type="term" value="P:post-embryonic development"/>
    <property type="evidence" value="ECO:0000266"/>
    <property type="project" value="RGD"/>
</dbReference>
<dbReference type="GO" id="GO:0040014">
    <property type="term" value="P:regulation of multicellular organism growth"/>
    <property type="evidence" value="ECO:0000266"/>
    <property type="project" value="RGD"/>
</dbReference>
<dbReference type="GO" id="GO:0060021">
    <property type="term" value="P:roof of mouth development"/>
    <property type="evidence" value="ECO:0000266"/>
    <property type="project" value="RGD"/>
</dbReference>
<dbReference type="GO" id="GO:0048705">
    <property type="term" value="P:skeletal system morphogenesis"/>
    <property type="evidence" value="ECO:0000266"/>
    <property type="project" value="RGD"/>
</dbReference>
<dbReference type="GO" id="GO:0007283">
    <property type="term" value="P:spermatogenesis"/>
    <property type="evidence" value="ECO:0000266"/>
    <property type="project" value="RGD"/>
</dbReference>
<dbReference type="GO" id="GO:0030149">
    <property type="term" value="P:sphingolipid catabolic process"/>
    <property type="evidence" value="ECO:0000250"/>
    <property type="project" value="UniProtKB"/>
</dbReference>
<dbReference type="GO" id="GO:0001570">
    <property type="term" value="P:vasculogenesis"/>
    <property type="evidence" value="ECO:0000266"/>
    <property type="project" value="RGD"/>
</dbReference>
<dbReference type="CDD" id="cd06450">
    <property type="entry name" value="DOPA_deC_like"/>
    <property type="match status" value="1"/>
</dbReference>
<dbReference type="FunFam" id="3.90.1150.10:FF:000020">
    <property type="entry name" value="Sphingosine-1-phosphate lyase 1"/>
    <property type="match status" value="1"/>
</dbReference>
<dbReference type="FunFam" id="6.10.140.2150:FF:000001">
    <property type="entry name" value="Sphingosine-1-phosphate lyase 1"/>
    <property type="match status" value="1"/>
</dbReference>
<dbReference type="FunFam" id="3.40.640.10:FF:000020">
    <property type="entry name" value="sphingosine-1-phosphate lyase 1"/>
    <property type="match status" value="1"/>
</dbReference>
<dbReference type="Gene3D" id="6.10.140.2150">
    <property type="match status" value="1"/>
</dbReference>
<dbReference type="Gene3D" id="3.90.1150.10">
    <property type="entry name" value="Aspartate Aminotransferase, domain 1"/>
    <property type="match status" value="1"/>
</dbReference>
<dbReference type="Gene3D" id="3.40.640.10">
    <property type="entry name" value="Type I PLP-dependent aspartate aminotransferase-like (Major domain)"/>
    <property type="match status" value="1"/>
</dbReference>
<dbReference type="InterPro" id="IPR050477">
    <property type="entry name" value="GrpII_AminoAcid_Decarb"/>
</dbReference>
<dbReference type="InterPro" id="IPR002129">
    <property type="entry name" value="PyrdxlP-dep_de-COase"/>
</dbReference>
<dbReference type="InterPro" id="IPR015424">
    <property type="entry name" value="PyrdxlP-dep_Trfase"/>
</dbReference>
<dbReference type="InterPro" id="IPR015421">
    <property type="entry name" value="PyrdxlP-dep_Trfase_major"/>
</dbReference>
<dbReference type="InterPro" id="IPR015422">
    <property type="entry name" value="PyrdxlP-dep_Trfase_small"/>
</dbReference>
<dbReference type="PANTHER" id="PTHR42735">
    <property type="match status" value="1"/>
</dbReference>
<dbReference type="PANTHER" id="PTHR42735:SF6">
    <property type="entry name" value="SPHINGOSINE-1-PHOSPHATE LYASE 1"/>
    <property type="match status" value="1"/>
</dbReference>
<dbReference type="Pfam" id="PF00282">
    <property type="entry name" value="Pyridoxal_deC"/>
    <property type="match status" value="1"/>
</dbReference>
<dbReference type="SUPFAM" id="SSF53383">
    <property type="entry name" value="PLP-dependent transferases"/>
    <property type="match status" value="1"/>
</dbReference>
<sequence length="568" mass="63758">MPSTDLLKLKDFEPYLEILEAYSTKAKNYVNGYCTKYEPWQLIAGSVLCTLLVVWVYELIFQPESLWSRFKNKLFRLIRKMPFIGRKIQQQLTKAKKDLVKNMPFLKLDKDYVKTLPAQGLSTAEVLERLKEYSSMDVFWQEGKASGAVYSGEPKLTELLVQAYGEFTWSNPLHPDIFPGLRKLEAEIVRMTCSLFNGGPDSCGCVTSGGTESILMACKAYRDLALEKGIKTPEIVAPESAHAAFDKAAHYFGMKIVRVAQKKNMEVDVRAMKRAISRNTAMLVCSAPQFPHGVIDPIPEVAKLAVKYKIPFHVDACLGGFLIVFMEKAGYPLEKPFDFRVKGVTSISADTHKYGYAPKGSSVVMYSNEKYRKYQFFVDADWQGGIYASPSIAGSRPGGIIAACWAALMHFGENGYVEATKQIIKTARFLKSELENIKNIFILGDPQLSVIALGSNDFDIYRLSNMMSAKGWNFNYLQFPRSIHFCITLVHTRKRVAIQFLKDIRESVTQIMKNPKAKTTGMGAIYGMAQATIDRKMVAEISSVFLDSLYSTDPVTQGNQMNGSPKPR</sequence>
<evidence type="ECO:0000250" key="1"/>
<evidence type="ECO:0000250" key="2">
    <source>
        <dbReference type="UniProtKB" id="O95470"/>
    </source>
</evidence>
<evidence type="ECO:0000250" key="3">
    <source>
        <dbReference type="UniProtKB" id="Q8R0X7"/>
    </source>
</evidence>
<evidence type="ECO:0000250" key="4">
    <source>
        <dbReference type="UniProtKB" id="Q9V7Y2"/>
    </source>
</evidence>
<evidence type="ECO:0000255" key="5"/>
<evidence type="ECO:0000305" key="6"/>
<evidence type="ECO:0000312" key="7">
    <source>
        <dbReference type="RGD" id="628599"/>
    </source>
</evidence>
<organism>
    <name type="scientific">Rattus norvegicus</name>
    <name type="common">Rat</name>
    <dbReference type="NCBI Taxonomy" id="10116"/>
    <lineage>
        <taxon>Eukaryota</taxon>
        <taxon>Metazoa</taxon>
        <taxon>Chordata</taxon>
        <taxon>Craniata</taxon>
        <taxon>Vertebrata</taxon>
        <taxon>Euteleostomi</taxon>
        <taxon>Mammalia</taxon>
        <taxon>Eutheria</taxon>
        <taxon>Euarchontoglires</taxon>
        <taxon>Glires</taxon>
        <taxon>Rodentia</taxon>
        <taxon>Myomorpha</taxon>
        <taxon>Muroidea</taxon>
        <taxon>Muridae</taxon>
        <taxon>Murinae</taxon>
        <taxon>Rattus</taxon>
    </lineage>
</organism>